<reference key="1">
    <citation type="journal article" date="2011" name="J. Bacteriol.">
        <title>Complete genome and proteome of Acholeplasma laidlawii.</title>
        <authorList>
            <person name="Lazarev V.N."/>
            <person name="Levitskii S.A."/>
            <person name="Basovskii Y.I."/>
            <person name="Chukin M.M."/>
            <person name="Akopian T.A."/>
            <person name="Vereshchagin V.V."/>
            <person name="Kostrjukova E.S."/>
            <person name="Kovaleva G.Y."/>
            <person name="Kazanov M.D."/>
            <person name="Malko D.B."/>
            <person name="Vitreschak A.G."/>
            <person name="Sernova N.V."/>
            <person name="Gelfand M.S."/>
            <person name="Demina I.A."/>
            <person name="Serebryakova M.V."/>
            <person name="Galyamina M.A."/>
            <person name="Vtyurin N.N."/>
            <person name="Rogov S.I."/>
            <person name="Alexeev D.G."/>
            <person name="Ladygina V.G."/>
            <person name="Govorun V.M."/>
        </authorList>
    </citation>
    <scope>NUCLEOTIDE SEQUENCE [LARGE SCALE GENOMIC DNA]</scope>
    <source>
        <strain>PG-8A</strain>
    </source>
</reference>
<evidence type="ECO:0000255" key="1">
    <source>
        <dbReference type="HAMAP-Rule" id="MF_00008"/>
    </source>
</evidence>
<sequence length="288" mass="33318">MKQYLDLARHIMENGTLKSDRTGTGTKSIFGYQMFFDLKDGFPLLTTKKTFLKGIIHELLWFIKGDTNIKYLVDNNVGIWTDWPYKNYMNSSEYQGESIKEFSDKIRQSDEFAKKWGDLGPVYGSQWRNFNGVDQIEYIINTLKTNPDSRRMVLSAWNPAEIGQMMLPPCHTLIQFYVVDNKLSLQLYQRSGDVFLGIPFNIASYAVFLMMVAQVTGFELGSFVHTIGDAHIYTNHFDQINLQLTRTPRRLPILKINKSITRLEDFKYEDFELVGYDPYPPIKGVVAV</sequence>
<protein>
    <recommendedName>
        <fullName evidence="1">Thymidylate synthase</fullName>
        <shortName evidence="1">TS</shortName>
        <shortName evidence="1">TSase</shortName>
        <ecNumber evidence="1">2.1.1.45</ecNumber>
    </recommendedName>
</protein>
<comment type="function">
    <text evidence="1">Catalyzes the reductive methylation of 2'-deoxyuridine-5'-monophosphate (dUMP) to 2'-deoxythymidine-5'-monophosphate (dTMP) while utilizing 5,10-methylenetetrahydrofolate (mTHF) as the methyl donor and reductant in the reaction, yielding dihydrofolate (DHF) as a by-product. This enzymatic reaction provides an intracellular de novo source of dTMP, an essential precursor for DNA biosynthesis.</text>
</comment>
<comment type="catalytic activity">
    <reaction evidence="1">
        <text>dUMP + (6R)-5,10-methylene-5,6,7,8-tetrahydrofolate = 7,8-dihydrofolate + dTMP</text>
        <dbReference type="Rhea" id="RHEA:12104"/>
        <dbReference type="ChEBI" id="CHEBI:15636"/>
        <dbReference type="ChEBI" id="CHEBI:57451"/>
        <dbReference type="ChEBI" id="CHEBI:63528"/>
        <dbReference type="ChEBI" id="CHEBI:246422"/>
        <dbReference type="EC" id="2.1.1.45"/>
    </reaction>
</comment>
<comment type="pathway">
    <text evidence="1">Pyrimidine metabolism; dTTP biosynthesis.</text>
</comment>
<comment type="subunit">
    <text evidence="1">Homodimer.</text>
</comment>
<comment type="subcellular location">
    <subcellularLocation>
        <location evidence="1">Cytoplasm</location>
    </subcellularLocation>
</comment>
<comment type="similarity">
    <text evidence="1">Belongs to the thymidylate synthase family. Bacterial-type ThyA subfamily.</text>
</comment>
<organism>
    <name type="scientific">Acholeplasma laidlawii (strain PG-8A)</name>
    <dbReference type="NCBI Taxonomy" id="441768"/>
    <lineage>
        <taxon>Bacteria</taxon>
        <taxon>Bacillati</taxon>
        <taxon>Mycoplasmatota</taxon>
        <taxon>Mollicutes</taxon>
        <taxon>Acholeplasmatales</taxon>
        <taxon>Acholeplasmataceae</taxon>
        <taxon>Acholeplasma</taxon>
    </lineage>
</organism>
<gene>
    <name evidence="1" type="primary">thyA</name>
    <name type="ordered locus">ACL_0691</name>
</gene>
<name>TYSY_ACHLI</name>
<dbReference type="EC" id="2.1.1.45" evidence="1"/>
<dbReference type="EMBL" id="CP000896">
    <property type="protein sequence ID" value="ABX81307.1"/>
    <property type="molecule type" value="Genomic_DNA"/>
</dbReference>
<dbReference type="RefSeq" id="WP_012242638.1">
    <property type="nucleotide sequence ID" value="NC_010163.1"/>
</dbReference>
<dbReference type="SMR" id="A9NG27"/>
<dbReference type="STRING" id="441768.ACL_0691"/>
<dbReference type="GeneID" id="41338855"/>
<dbReference type="KEGG" id="acl:ACL_0691"/>
<dbReference type="eggNOG" id="COG0207">
    <property type="taxonomic scope" value="Bacteria"/>
</dbReference>
<dbReference type="HOGENOM" id="CLU_021669_0_0_14"/>
<dbReference type="OrthoDB" id="9774633at2"/>
<dbReference type="UniPathway" id="UPA00575"/>
<dbReference type="Proteomes" id="UP000008558">
    <property type="component" value="Chromosome"/>
</dbReference>
<dbReference type="GO" id="GO:0005829">
    <property type="term" value="C:cytosol"/>
    <property type="evidence" value="ECO:0007669"/>
    <property type="project" value="TreeGrafter"/>
</dbReference>
<dbReference type="GO" id="GO:0004799">
    <property type="term" value="F:thymidylate synthase activity"/>
    <property type="evidence" value="ECO:0007669"/>
    <property type="project" value="UniProtKB-UniRule"/>
</dbReference>
<dbReference type="GO" id="GO:0006231">
    <property type="term" value="P:dTMP biosynthetic process"/>
    <property type="evidence" value="ECO:0007669"/>
    <property type="project" value="UniProtKB-UniRule"/>
</dbReference>
<dbReference type="GO" id="GO:0006235">
    <property type="term" value="P:dTTP biosynthetic process"/>
    <property type="evidence" value="ECO:0007669"/>
    <property type="project" value="UniProtKB-UniRule"/>
</dbReference>
<dbReference type="GO" id="GO:0032259">
    <property type="term" value="P:methylation"/>
    <property type="evidence" value="ECO:0007669"/>
    <property type="project" value="UniProtKB-KW"/>
</dbReference>
<dbReference type="CDD" id="cd00351">
    <property type="entry name" value="TS_Pyrimidine_HMase"/>
    <property type="match status" value="1"/>
</dbReference>
<dbReference type="FunFam" id="3.30.572.10:FF:000013">
    <property type="entry name" value="Thymidylate synthase"/>
    <property type="match status" value="1"/>
</dbReference>
<dbReference type="Gene3D" id="3.30.572.10">
    <property type="entry name" value="Thymidylate synthase/dCMP hydroxymethylase domain"/>
    <property type="match status" value="1"/>
</dbReference>
<dbReference type="HAMAP" id="MF_00008">
    <property type="entry name" value="Thymidy_synth_bact"/>
    <property type="match status" value="1"/>
</dbReference>
<dbReference type="InterPro" id="IPR045097">
    <property type="entry name" value="Thymidate_synth/dCMP_Mease"/>
</dbReference>
<dbReference type="InterPro" id="IPR023451">
    <property type="entry name" value="Thymidate_synth/dCMP_Mease_dom"/>
</dbReference>
<dbReference type="InterPro" id="IPR036926">
    <property type="entry name" value="Thymidate_synth/dCMP_Mease_sf"/>
</dbReference>
<dbReference type="InterPro" id="IPR000398">
    <property type="entry name" value="Thymidylate_synthase"/>
</dbReference>
<dbReference type="InterPro" id="IPR020940">
    <property type="entry name" value="Thymidylate_synthase_AS"/>
</dbReference>
<dbReference type="NCBIfam" id="NF002496">
    <property type="entry name" value="PRK01827.1-2"/>
    <property type="match status" value="1"/>
</dbReference>
<dbReference type="NCBIfam" id="TIGR03284">
    <property type="entry name" value="thym_sym"/>
    <property type="match status" value="1"/>
</dbReference>
<dbReference type="PANTHER" id="PTHR11548">
    <property type="entry name" value="THYMIDYLATE SYNTHASE 1"/>
    <property type="match status" value="1"/>
</dbReference>
<dbReference type="PANTHER" id="PTHR11548:SF1">
    <property type="entry name" value="THYMIDYLATE SYNTHASE 1"/>
    <property type="match status" value="1"/>
</dbReference>
<dbReference type="Pfam" id="PF00303">
    <property type="entry name" value="Thymidylat_synt"/>
    <property type="match status" value="1"/>
</dbReference>
<dbReference type="PRINTS" id="PR00108">
    <property type="entry name" value="THYMDSNTHASE"/>
</dbReference>
<dbReference type="SUPFAM" id="SSF55831">
    <property type="entry name" value="Thymidylate synthase/dCMP hydroxymethylase"/>
    <property type="match status" value="1"/>
</dbReference>
<dbReference type="PROSITE" id="PS00091">
    <property type="entry name" value="THYMIDYLATE_SYNTHASE"/>
    <property type="match status" value="1"/>
</dbReference>
<accession>A9NG27</accession>
<proteinExistence type="inferred from homology"/>
<feature type="chain" id="PRO_1000073866" description="Thymidylate synthase">
    <location>
        <begin position="1"/>
        <end position="288"/>
    </location>
</feature>
<feature type="active site" description="Nucleophile" evidence="1">
    <location>
        <position position="170"/>
    </location>
</feature>
<feature type="binding site" description="in other chain" evidence="1">
    <location>
        <position position="21"/>
    </location>
    <ligand>
        <name>dUMP</name>
        <dbReference type="ChEBI" id="CHEBI:246422"/>
        <note>ligand shared between dimeric partners</note>
    </ligand>
</feature>
<feature type="binding site" evidence="1">
    <location>
        <begin position="150"/>
        <end position="151"/>
    </location>
    <ligand>
        <name>dUMP</name>
        <dbReference type="ChEBI" id="CHEBI:246422"/>
        <note>ligand shared between dimeric partners</note>
    </ligand>
</feature>
<feature type="binding site" description="in other chain" evidence="1">
    <location>
        <begin position="190"/>
        <end position="193"/>
    </location>
    <ligand>
        <name>dUMP</name>
        <dbReference type="ChEBI" id="CHEBI:246422"/>
        <note>ligand shared between dimeric partners</note>
    </ligand>
</feature>
<feature type="binding site" evidence="1">
    <location>
        <position position="193"/>
    </location>
    <ligand>
        <name>(6R)-5,10-methylene-5,6,7,8-tetrahydrofolate</name>
        <dbReference type="ChEBI" id="CHEBI:15636"/>
    </ligand>
</feature>
<feature type="binding site" description="in other chain" evidence="1">
    <location>
        <position position="201"/>
    </location>
    <ligand>
        <name>dUMP</name>
        <dbReference type="ChEBI" id="CHEBI:246422"/>
        <note>ligand shared between dimeric partners</note>
    </ligand>
</feature>
<feature type="binding site" description="in other chain" evidence="1">
    <location>
        <begin position="231"/>
        <end position="233"/>
    </location>
    <ligand>
        <name>dUMP</name>
        <dbReference type="ChEBI" id="CHEBI:246422"/>
        <note>ligand shared between dimeric partners</note>
    </ligand>
</feature>
<feature type="binding site" evidence="1">
    <location>
        <position position="287"/>
    </location>
    <ligand>
        <name>(6R)-5,10-methylene-5,6,7,8-tetrahydrofolate</name>
        <dbReference type="ChEBI" id="CHEBI:15636"/>
    </ligand>
</feature>
<keyword id="KW-0963">Cytoplasm</keyword>
<keyword id="KW-0489">Methyltransferase</keyword>
<keyword id="KW-0545">Nucleotide biosynthesis</keyword>
<keyword id="KW-1185">Reference proteome</keyword>
<keyword id="KW-0808">Transferase</keyword>